<proteinExistence type="inferred from homology"/>
<gene>
    <name evidence="1" type="primary">rsmG</name>
    <name type="ordered locus">BPP0002</name>
</gene>
<reference key="1">
    <citation type="journal article" date="2003" name="Nat. Genet.">
        <title>Comparative analysis of the genome sequences of Bordetella pertussis, Bordetella parapertussis and Bordetella bronchiseptica.</title>
        <authorList>
            <person name="Parkhill J."/>
            <person name="Sebaihia M."/>
            <person name="Preston A."/>
            <person name="Murphy L.D."/>
            <person name="Thomson N.R."/>
            <person name="Harris D.E."/>
            <person name="Holden M.T.G."/>
            <person name="Churcher C.M."/>
            <person name="Bentley S.D."/>
            <person name="Mungall K.L."/>
            <person name="Cerdeno-Tarraga A.-M."/>
            <person name="Temple L."/>
            <person name="James K.D."/>
            <person name="Harris B."/>
            <person name="Quail M.A."/>
            <person name="Achtman M."/>
            <person name="Atkin R."/>
            <person name="Baker S."/>
            <person name="Basham D."/>
            <person name="Bason N."/>
            <person name="Cherevach I."/>
            <person name="Chillingworth T."/>
            <person name="Collins M."/>
            <person name="Cronin A."/>
            <person name="Davis P."/>
            <person name="Doggett J."/>
            <person name="Feltwell T."/>
            <person name="Goble A."/>
            <person name="Hamlin N."/>
            <person name="Hauser H."/>
            <person name="Holroyd S."/>
            <person name="Jagels K."/>
            <person name="Leather S."/>
            <person name="Moule S."/>
            <person name="Norberczak H."/>
            <person name="O'Neil S."/>
            <person name="Ormond D."/>
            <person name="Price C."/>
            <person name="Rabbinowitsch E."/>
            <person name="Rutter S."/>
            <person name="Sanders M."/>
            <person name="Saunders D."/>
            <person name="Seeger K."/>
            <person name="Sharp S."/>
            <person name="Simmonds M."/>
            <person name="Skelton J."/>
            <person name="Squares R."/>
            <person name="Squares S."/>
            <person name="Stevens K."/>
            <person name="Unwin L."/>
            <person name="Whitehead S."/>
            <person name="Barrell B.G."/>
            <person name="Maskell D.J."/>
        </authorList>
    </citation>
    <scope>NUCLEOTIDE SEQUENCE [LARGE SCALE GENOMIC DNA]</scope>
    <source>
        <strain>12822 / ATCC BAA-587 / NCTC 13253</strain>
    </source>
</reference>
<feature type="chain" id="PRO_0000184223" description="Ribosomal RNA small subunit methyltransferase G">
    <location>
        <begin position="1"/>
        <end position="230"/>
    </location>
</feature>
<feature type="binding site" evidence="1">
    <location>
        <position position="93"/>
    </location>
    <ligand>
        <name>S-adenosyl-L-methionine</name>
        <dbReference type="ChEBI" id="CHEBI:59789"/>
    </ligand>
</feature>
<feature type="binding site" evidence="1">
    <location>
        <position position="98"/>
    </location>
    <ligand>
        <name>S-adenosyl-L-methionine</name>
        <dbReference type="ChEBI" id="CHEBI:59789"/>
    </ligand>
</feature>
<feature type="binding site" evidence="1">
    <location>
        <begin position="144"/>
        <end position="145"/>
    </location>
    <ligand>
        <name>S-adenosyl-L-methionine</name>
        <dbReference type="ChEBI" id="CHEBI:59789"/>
    </ligand>
</feature>
<feature type="binding site" evidence="1">
    <location>
        <position position="158"/>
    </location>
    <ligand>
        <name>S-adenosyl-L-methionine</name>
        <dbReference type="ChEBI" id="CHEBI:59789"/>
    </ligand>
</feature>
<organism>
    <name type="scientific">Bordetella parapertussis (strain 12822 / ATCC BAA-587 / NCTC 13253)</name>
    <dbReference type="NCBI Taxonomy" id="257311"/>
    <lineage>
        <taxon>Bacteria</taxon>
        <taxon>Pseudomonadati</taxon>
        <taxon>Pseudomonadota</taxon>
        <taxon>Betaproteobacteria</taxon>
        <taxon>Burkholderiales</taxon>
        <taxon>Alcaligenaceae</taxon>
        <taxon>Bordetella</taxon>
    </lineage>
</organism>
<comment type="function">
    <text evidence="1">Specifically methylates the N7 position of guanine in position 527 of 16S rRNA.</text>
</comment>
<comment type="catalytic activity">
    <reaction evidence="1">
        <text>guanosine(527) in 16S rRNA + S-adenosyl-L-methionine = N(7)-methylguanosine(527) in 16S rRNA + S-adenosyl-L-homocysteine</text>
        <dbReference type="Rhea" id="RHEA:42732"/>
        <dbReference type="Rhea" id="RHEA-COMP:10209"/>
        <dbReference type="Rhea" id="RHEA-COMP:10210"/>
        <dbReference type="ChEBI" id="CHEBI:57856"/>
        <dbReference type="ChEBI" id="CHEBI:59789"/>
        <dbReference type="ChEBI" id="CHEBI:74269"/>
        <dbReference type="ChEBI" id="CHEBI:74480"/>
        <dbReference type="EC" id="2.1.1.170"/>
    </reaction>
</comment>
<comment type="subcellular location">
    <subcellularLocation>
        <location evidence="1">Cytoplasm</location>
    </subcellularLocation>
</comment>
<comment type="similarity">
    <text evidence="1">Belongs to the methyltransferase superfamily. RNA methyltransferase RsmG family.</text>
</comment>
<dbReference type="EC" id="2.1.1.170" evidence="1"/>
<dbReference type="EMBL" id="BX640423">
    <property type="protein sequence ID" value="CAE39743.1"/>
    <property type="molecule type" value="Genomic_DNA"/>
</dbReference>
<dbReference type="RefSeq" id="WP_003806878.1">
    <property type="nucleotide sequence ID" value="NC_002928.3"/>
</dbReference>
<dbReference type="SMR" id="Q7W2I0"/>
<dbReference type="GeneID" id="69599905"/>
<dbReference type="GeneID" id="93206227"/>
<dbReference type="KEGG" id="bpa:BPP0002"/>
<dbReference type="HOGENOM" id="CLU_065341_2_0_4"/>
<dbReference type="Proteomes" id="UP000001421">
    <property type="component" value="Chromosome"/>
</dbReference>
<dbReference type="GO" id="GO:0005829">
    <property type="term" value="C:cytosol"/>
    <property type="evidence" value="ECO:0007669"/>
    <property type="project" value="TreeGrafter"/>
</dbReference>
<dbReference type="GO" id="GO:0070043">
    <property type="term" value="F:rRNA (guanine-N7-)-methyltransferase activity"/>
    <property type="evidence" value="ECO:0007669"/>
    <property type="project" value="UniProtKB-UniRule"/>
</dbReference>
<dbReference type="Gene3D" id="3.40.50.150">
    <property type="entry name" value="Vaccinia Virus protein VP39"/>
    <property type="match status" value="1"/>
</dbReference>
<dbReference type="HAMAP" id="MF_00074">
    <property type="entry name" value="16SrRNA_methyltr_G"/>
    <property type="match status" value="1"/>
</dbReference>
<dbReference type="InterPro" id="IPR003682">
    <property type="entry name" value="rRNA_ssu_MeTfrase_G"/>
</dbReference>
<dbReference type="InterPro" id="IPR029063">
    <property type="entry name" value="SAM-dependent_MTases_sf"/>
</dbReference>
<dbReference type="NCBIfam" id="TIGR00138">
    <property type="entry name" value="rsmG_gidB"/>
    <property type="match status" value="1"/>
</dbReference>
<dbReference type="PANTHER" id="PTHR31760">
    <property type="entry name" value="S-ADENOSYL-L-METHIONINE-DEPENDENT METHYLTRANSFERASES SUPERFAMILY PROTEIN"/>
    <property type="match status" value="1"/>
</dbReference>
<dbReference type="PANTHER" id="PTHR31760:SF0">
    <property type="entry name" value="S-ADENOSYL-L-METHIONINE-DEPENDENT METHYLTRANSFERASES SUPERFAMILY PROTEIN"/>
    <property type="match status" value="1"/>
</dbReference>
<dbReference type="Pfam" id="PF02527">
    <property type="entry name" value="GidB"/>
    <property type="match status" value="1"/>
</dbReference>
<dbReference type="PIRSF" id="PIRSF003078">
    <property type="entry name" value="GidB"/>
    <property type="match status" value="1"/>
</dbReference>
<dbReference type="SUPFAM" id="SSF53335">
    <property type="entry name" value="S-adenosyl-L-methionine-dependent methyltransferases"/>
    <property type="match status" value="1"/>
</dbReference>
<sequence length="230" mass="25049">MSAVPDIPGGPAQRLAQACDALRLPADAGQQQKLLRYIEQMQRWNRTYNLTAIRDPGQMLVQHLFDSLSVVAPLERGLPAAGSGARVKLFDVGSGGGLPGVVLAIMRAHWDVTCVDAVEKKTAFVRQMAGALGLPNLQAAHTRIEQLEPAQCDVVISRAFASLQDFAKLAGRHVREGGTLVAMKGKVPDDEIQALQQHGHWTVERIEPLVVPALDAQRCLIWMRRSQGNI</sequence>
<keyword id="KW-0963">Cytoplasm</keyword>
<keyword id="KW-0489">Methyltransferase</keyword>
<keyword id="KW-0698">rRNA processing</keyword>
<keyword id="KW-0949">S-adenosyl-L-methionine</keyword>
<keyword id="KW-0808">Transferase</keyword>
<name>RSMG_BORPA</name>
<protein>
    <recommendedName>
        <fullName evidence="1">Ribosomal RNA small subunit methyltransferase G</fullName>
        <ecNumber evidence="1">2.1.1.170</ecNumber>
    </recommendedName>
    <alternativeName>
        <fullName evidence="1">16S rRNA 7-methylguanosine methyltransferase</fullName>
        <shortName evidence="1">16S rRNA m7G methyltransferase</shortName>
    </alternativeName>
</protein>
<accession>Q7W2I0</accession>
<evidence type="ECO:0000255" key="1">
    <source>
        <dbReference type="HAMAP-Rule" id="MF_00074"/>
    </source>
</evidence>